<protein>
    <recommendedName>
        <fullName>Tetraspanin-4</fullName>
    </recommendedName>
</protein>
<comment type="function">
    <text evidence="1">May be involved in the regulation of cell differentiation.</text>
</comment>
<comment type="subcellular location">
    <subcellularLocation>
        <location evidence="1">Membrane</location>
        <topology evidence="3">Multi-pass membrane protein</topology>
    </subcellularLocation>
</comment>
<comment type="similarity">
    <text evidence="3">Belongs to the tetraspanin (TM4SF) family.</text>
</comment>
<gene>
    <name type="primary">TET4</name>
    <name type="ordered locus">At5g60220</name>
    <name type="ORF">F15L12.11</name>
</gene>
<reference key="1">
    <citation type="submission" date="1999-04" db="EMBL/GenBank/DDBJ databases">
        <title>Structural analysis of Arabidopsis thaliana chromosome 5. XI.</title>
        <authorList>
            <person name="Kaneko T."/>
            <person name="Katoh T."/>
            <person name="Asamizu E."/>
            <person name="Sato S."/>
            <person name="Nakamura Y."/>
            <person name="Kotani H."/>
            <person name="Tabata S."/>
        </authorList>
    </citation>
    <scope>NUCLEOTIDE SEQUENCE [LARGE SCALE GENOMIC DNA]</scope>
    <source>
        <strain>cv. Columbia</strain>
    </source>
</reference>
<reference key="2">
    <citation type="journal article" date="2017" name="Plant J.">
        <title>Araport11: a complete reannotation of the Arabidopsis thaliana reference genome.</title>
        <authorList>
            <person name="Cheng C.Y."/>
            <person name="Krishnakumar V."/>
            <person name="Chan A.P."/>
            <person name="Thibaud-Nissen F."/>
            <person name="Schobel S."/>
            <person name="Town C.D."/>
        </authorList>
    </citation>
    <scope>GENOME REANNOTATION</scope>
    <source>
        <strain>cv. Columbia</strain>
    </source>
</reference>
<name>TET4_ARATH</name>
<organism>
    <name type="scientific">Arabidopsis thaliana</name>
    <name type="common">Mouse-ear cress</name>
    <dbReference type="NCBI Taxonomy" id="3702"/>
    <lineage>
        <taxon>Eukaryota</taxon>
        <taxon>Viridiplantae</taxon>
        <taxon>Streptophyta</taxon>
        <taxon>Embryophyta</taxon>
        <taxon>Tracheophyta</taxon>
        <taxon>Spermatophyta</taxon>
        <taxon>Magnoliopsida</taxon>
        <taxon>eudicotyledons</taxon>
        <taxon>Gunneridae</taxon>
        <taxon>Pentapetalae</taxon>
        <taxon>rosids</taxon>
        <taxon>malvids</taxon>
        <taxon>Brassicales</taxon>
        <taxon>Brassicaceae</taxon>
        <taxon>Camelineae</taxon>
        <taxon>Arabidopsis</taxon>
    </lineage>
</organism>
<accession>Q9LSS4</accession>
<feature type="chain" id="PRO_0000421044" description="Tetraspanin-4">
    <location>
        <begin position="1"/>
        <end position="327"/>
    </location>
</feature>
<feature type="topological domain" description="Cytoplasmic" evidence="2">
    <location>
        <begin position="1"/>
        <end position="6"/>
    </location>
</feature>
<feature type="transmembrane region" description="Helical" evidence="2">
    <location>
        <begin position="7"/>
        <end position="27"/>
    </location>
</feature>
<feature type="topological domain" description="Extracellular" evidence="2">
    <location>
        <begin position="28"/>
        <end position="43"/>
    </location>
</feature>
<feature type="transmembrane region" description="Helical" evidence="2">
    <location>
        <begin position="44"/>
        <end position="64"/>
    </location>
</feature>
<feature type="topological domain" description="Cytoplasmic" evidence="2">
    <location>
        <begin position="65"/>
        <end position="75"/>
    </location>
</feature>
<feature type="transmembrane region" description="Helical" evidence="2">
    <location>
        <begin position="76"/>
        <end position="96"/>
    </location>
</feature>
<feature type="topological domain" description="Extracellular" evidence="2">
    <location>
        <begin position="97"/>
        <end position="235"/>
    </location>
</feature>
<feature type="transmembrane region" description="Helical" evidence="2">
    <location>
        <begin position="236"/>
        <end position="256"/>
    </location>
</feature>
<feature type="topological domain" description="Cytoplasmic" evidence="2">
    <location>
        <begin position="257"/>
        <end position="287"/>
    </location>
</feature>
<feature type="transmembrane region" description="Helical" evidence="2">
    <location>
        <begin position="288"/>
        <end position="308"/>
    </location>
</feature>
<feature type="topological domain" description="Extracellular" evidence="2">
    <location>
        <begin position="309"/>
        <end position="327"/>
    </location>
</feature>
<feature type="glycosylation site" description="N-linked (GlcNAc...) asparagine" evidence="2">
    <location>
        <position position="34"/>
    </location>
</feature>
<feature type="glycosylation site" description="N-linked (GlcNAc...) asparagine" evidence="2">
    <location>
        <position position="187"/>
    </location>
</feature>
<keyword id="KW-0325">Glycoprotein</keyword>
<keyword id="KW-0472">Membrane</keyword>
<keyword id="KW-1185">Reference proteome</keyword>
<keyword id="KW-0812">Transmembrane</keyword>
<keyword id="KW-1133">Transmembrane helix</keyword>
<proteinExistence type="inferred from homology"/>
<sequence length="327" mass="37178">MRSRSNLIGLINFFTFLLSIPILGGGIWLSSRANSTDCLRFLQWPLIIIGISIMVISLAGIAGACYQNKFLMWLYLFTMFFVIAALIGFTIFAYVVTDKGSGRFVMNRRYLDYYLNDYSGWLKDRVTDNGYWRDIGSCVRDSGVCKKIGRDLNGVPETAHMFYFRNLSPVESGCCKPPTDCGYTYVNETVWIPGGEMVGPNPDCMLWNNDQRLLCYQCSSCKAGVLGSLKKSWRKVSVINIVVVIILVIFYVIACAAYQNVKRMYNDEPVGEARMTNLILVIFKFKEILVQFFFGIVFLLLFNGLMVCCCNDKFAFSVFFFGYVTYA</sequence>
<dbReference type="EMBL" id="AB026632">
    <property type="protein sequence ID" value="BAA97503.1"/>
    <property type="molecule type" value="Genomic_DNA"/>
</dbReference>
<dbReference type="EMBL" id="CP002688">
    <property type="protein sequence ID" value="AED97295.1"/>
    <property type="molecule type" value="Genomic_DNA"/>
</dbReference>
<dbReference type="RefSeq" id="NP_200830.1">
    <property type="nucleotide sequence ID" value="NM_125415.2"/>
</dbReference>
<dbReference type="FunCoup" id="Q9LSS4">
    <property type="interactions" value="108"/>
</dbReference>
<dbReference type="STRING" id="3702.Q9LSS4"/>
<dbReference type="GlyCosmos" id="Q9LSS4">
    <property type="glycosylation" value="2 sites, No reported glycans"/>
</dbReference>
<dbReference type="GlyGen" id="Q9LSS4">
    <property type="glycosylation" value="2 sites"/>
</dbReference>
<dbReference type="PaxDb" id="3702-AT5G60220.1"/>
<dbReference type="ProteomicsDB" id="232744"/>
<dbReference type="EnsemblPlants" id="AT5G60220.1">
    <property type="protein sequence ID" value="AT5G60220.1"/>
    <property type="gene ID" value="AT5G60220"/>
</dbReference>
<dbReference type="GeneID" id="836144"/>
<dbReference type="Gramene" id="AT5G60220.1">
    <property type="protein sequence ID" value="AT5G60220.1"/>
    <property type="gene ID" value="AT5G60220"/>
</dbReference>
<dbReference type="KEGG" id="ath:AT5G60220"/>
<dbReference type="Araport" id="AT5G60220"/>
<dbReference type="TAIR" id="AT5G60220">
    <property type="gene designation" value="TET4"/>
</dbReference>
<dbReference type="eggNOG" id="ENOG502QU76">
    <property type="taxonomic scope" value="Eukaryota"/>
</dbReference>
<dbReference type="HOGENOM" id="CLU_066970_0_0_1"/>
<dbReference type="InParanoid" id="Q9LSS4"/>
<dbReference type="OMA" id="QKSMYES"/>
<dbReference type="PhylomeDB" id="Q9LSS4"/>
<dbReference type="PRO" id="PR:Q9LSS4"/>
<dbReference type="Proteomes" id="UP000006548">
    <property type="component" value="Chromosome 5"/>
</dbReference>
<dbReference type="ExpressionAtlas" id="Q9LSS4">
    <property type="expression patterns" value="baseline and differential"/>
</dbReference>
<dbReference type="GO" id="GO:0016020">
    <property type="term" value="C:membrane"/>
    <property type="evidence" value="ECO:0007669"/>
    <property type="project" value="UniProtKB-SubCell"/>
</dbReference>
<dbReference type="GO" id="GO:0009734">
    <property type="term" value="P:auxin-activated signaling pathway"/>
    <property type="evidence" value="ECO:0007669"/>
    <property type="project" value="InterPro"/>
</dbReference>
<dbReference type="InterPro" id="IPR044991">
    <property type="entry name" value="TET_plant"/>
</dbReference>
<dbReference type="InterPro" id="IPR018499">
    <property type="entry name" value="Tetraspanin/Peripherin"/>
</dbReference>
<dbReference type="PANTHER" id="PTHR32191">
    <property type="entry name" value="TETRASPANIN-8-RELATED"/>
    <property type="match status" value="1"/>
</dbReference>
<dbReference type="Pfam" id="PF00335">
    <property type="entry name" value="Tetraspanin"/>
    <property type="match status" value="1"/>
</dbReference>
<dbReference type="PRINTS" id="PR00259">
    <property type="entry name" value="TMFOUR"/>
</dbReference>
<evidence type="ECO:0000250" key="1"/>
<evidence type="ECO:0000255" key="2"/>
<evidence type="ECO:0000305" key="3"/>